<evidence type="ECO:0000255" key="1">
    <source>
        <dbReference type="HAMAP-Rule" id="MF_01270"/>
    </source>
</evidence>
<reference key="1">
    <citation type="journal article" date="2011" name="J. Bacteriol.">
        <title>Comparative genomics of 28 Salmonella enterica isolates: evidence for CRISPR-mediated adaptive sublineage evolution.</title>
        <authorList>
            <person name="Fricke W.F."/>
            <person name="Mammel M.K."/>
            <person name="McDermott P.F."/>
            <person name="Tartera C."/>
            <person name="White D.G."/>
            <person name="Leclerc J.E."/>
            <person name="Ravel J."/>
            <person name="Cebula T.A."/>
        </authorList>
    </citation>
    <scope>NUCLEOTIDE SEQUENCE [LARGE SCALE GENOMIC DNA]</scope>
    <source>
        <strain>SL476</strain>
    </source>
</reference>
<keyword id="KW-0067">ATP-binding</keyword>
<keyword id="KW-0119">Carbohydrate metabolism</keyword>
<keyword id="KW-0418">Kinase</keyword>
<keyword id="KW-0547">Nucleotide-binding</keyword>
<keyword id="KW-0808">Transferase</keyword>
<dbReference type="EC" id="2.7.1.170" evidence="1"/>
<dbReference type="EMBL" id="CP001120">
    <property type="protein sequence ID" value="ACF68085.1"/>
    <property type="molecule type" value="Genomic_DNA"/>
</dbReference>
<dbReference type="RefSeq" id="WP_000835021.1">
    <property type="nucleotide sequence ID" value="NC_011083.1"/>
</dbReference>
<dbReference type="SMR" id="B4THC3"/>
<dbReference type="KEGG" id="seh:SeHA_C1616"/>
<dbReference type="HOGENOM" id="CLU_038782_0_0_6"/>
<dbReference type="UniPathway" id="UPA00343"/>
<dbReference type="UniPathway" id="UPA00544"/>
<dbReference type="Proteomes" id="UP000001866">
    <property type="component" value="Chromosome"/>
</dbReference>
<dbReference type="GO" id="GO:0005524">
    <property type="term" value="F:ATP binding"/>
    <property type="evidence" value="ECO:0007669"/>
    <property type="project" value="UniProtKB-UniRule"/>
</dbReference>
<dbReference type="GO" id="GO:0016301">
    <property type="term" value="F:kinase activity"/>
    <property type="evidence" value="ECO:0007669"/>
    <property type="project" value="UniProtKB-KW"/>
</dbReference>
<dbReference type="GO" id="GO:0016773">
    <property type="term" value="F:phosphotransferase activity, alcohol group as acceptor"/>
    <property type="evidence" value="ECO:0007669"/>
    <property type="project" value="UniProtKB-UniRule"/>
</dbReference>
<dbReference type="GO" id="GO:0097175">
    <property type="term" value="P:1,6-anhydro-N-acetyl-beta-muramic acid catabolic process"/>
    <property type="evidence" value="ECO:0007669"/>
    <property type="project" value="UniProtKB-UniRule"/>
</dbReference>
<dbReference type="GO" id="GO:0006040">
    <property type="term" value="P:amino sugar metabolic process"/>
    <property type="evidence" value="ECO:0007669"/>
    <property type="project" value="InterPro"/>
</dbReference>
<dbReference type="GO" id="GO:0009254">
    <property type="term" value="P:peptidoglycan turnover"/>
    <property type="evidence" value="ECO:0007669"/>
    <property type="project" value="UniProtKB-UniRule"/>
</dbReference>
<dbReference type="CDD" id="cd24050">
    <property type="entry name" value="ASKHA_NBD_ANMK"/>
    <property type="match status" value="1"/>
</dbReference>
<dbReference type="Gene3D" id="3.30.420.40">
    <property type="match status" value="2"/>
</dbReference>
<dbReference type="HAMAP" id="MF_01270">
    <property type="entry name" value="AnhMurNAc_kinase"/>
    <property type="match status" value="1"/>
</dbReference>
<dbReference type="InterPro" id="IPR005338">
    <property type="entry name" value="Anhydro_N_Ac-Mur_kinase"/>
</dbReference>
<dbReference type="InterPro" id="IPR043129">
    <property type="entry name" value="ATPase_NBD"/>
</dbReference>
<dbReference type="NCBIfam" id="NF007138">
    <property type="entry name" value="PRK09585.1-1"/>
    <property type="match status" value="1"/>
</dbReference>
<dbReference type="NCBIfam" id="NF007139">
    <property type="entry name" value="PRK09585.1-3"/>
    <property type="match status" value="1"/>
</dbReference>
<dbReference type="NCBIfam" id="NF007148">
    <property type="entry name" value="PRK09585.3-2"/>
    <property type="match status" value="1"/>
</dbReference>
<dbReference type="PANTHER" id="PTHR30605">
    <property type="entry name" value="ANHYDRO-N-ACETYLMURAMIC ACID KINASE"/>
    <property type="match status" value="1"/>
</dbReference>
<dbReference type="PANTHER" id="PTHR30605:SF0">
    <property type="entry name" value="ANHYDRO-N-ACETYLMURAMIC ACID KINASE"/>
    <property type="match status" value="1"/>
</dbReference>
<dbReference type="Pfam" id="PF03702">
    <property type="entry name" value="AnmK"/>
    <property type="match status" value="1"/>
</dbReference>
<dbReference type="SUPFAM" id="SSF53067">
    <property type="entry name" value="Actin-like ATPase domain"/>
    <property type="match status" value="1"/>
</dbReference>
<proteinExistence type="inferred from homology"/>
<organism>
    <name type="scientific">Salmonella heidelberg (strain SL476)</name>
    <dbReference type="NCBI Taxonomy" id="454169"/>
    <lineage>
        <taxon>Bacteria</taxon>
        <taxon>Pseudomonadati</taxon>
        <taxon>Pseudomonadota</taxon>
        <taxon>Gammaproteobacteria</taxon>
        <taxon>Enterobacterales</taxon>
        <taxon>Enterobacteriaceae</taxon>
        <taxon>Salmonella</taxon>
    </lineage>
</organism>
<accession>B4THC3</accession>
<name>ANMK_SALHS</name>
<protein>
    <recommendedName>
        <fullName evidence="1">Anhydro-N-acetylmuramic acid kinase</fullName>
        <ecNumber evidence="1">2.7.1.170</ecNumber>
    </recommendedName>
    <alternativeName>
        <fullName evidence="1">AnhMurNAc kinase</fullName>
    </alternativeName>
</protein>
<comment type="function">
    <text evidence="1">Catalyzes the specific phosphorylation of 1,6-anhydro-N-acetylmuramic acid (anhMurNAc) with the simultaneous cleavage of the 1,6-anhydro ring, generating MurNAc-6-P. Is required for the utilization of anhMurNAc either imported from the medium or derived from its own cell wall murein, and thus plays a role in cell wall recycling.</text>
</comment>
<comment type="catalytic activity">
    <reaction evidence="1">
        <text>1,6-anhydro-N-acetyl-beta-muramate + ATP + H2O = N-acetyl-D-muramate 6-phosphate + ADP + H(+)</text>
        <dbReference type="Rhea" id="RHEA:24952"/>
        <dbReference type="ChEBI" id="CHEBI:15377"/>
        <dbReference type="ChEBI" id="CHEBI:15378"/>
        <dbReference type="ChEBI" id="CHEBI:30616"/>
        <dbReference type="ChEBI" id="CHEBI:58690"/>
        <dbReference type="ChEBI" id="CHEBI:58722"/>
        <dbReference type="ChEBI" id="CHEBI:456216"/>
        <dbReference type="EC" id="2.7.1.170"/>
    </reaction>
</comment>
<comment type="pathway">
    <text evidence="1">Amino-sugar metabolism; 1,6-anhydro-N-acetylmuramate degradation.</text>
</comment>
<comment type="pathway">
    <text evidence="1">Cell wall biogenesis; peptidoglycan recycling.</text>
</comment>
<comment type="similarity">
    <text evidence="1">Belongs to the anhydro-N-acetylmuramic acid kinase family.</text>
</comment>
<gene>
    <name evidence="1" type="primary">anmK</name>
    <name type="ordered locus">SeHA_C1616</name>
</gene>
<feature type="chain" id="PRO_1000140171" description="Anhydro-N-acetylmuramic acid kinase">
    <location>
        <begin position="1"/>
        <end position="373"/>
    </location>
</feature>
<feature type="binding site" evidence="1">
    <location>
        <begin position="12"/>
        <end position="19"/>
    </location>
    <ligand>
        <name>ATP</name>
        <dbReference type="ChEBI" id="CHEBI:30616"/>
    </ligand>
</feature>
<sequence>MKSGRFIGVMSGTSLDGVDVVLAAIDETMVAQQASLTWPIPVHLKKGILDICQGQPLTLSQLGQLDTQLGRLFAQAVNALLAQQRLQPRDIVAIGCHGQTVWHEPTGEAPHTLQIGDNNHIVAHTGITVVGDFRRRDIALGGQGAPLVPAFHHALLGHPTEKRMVLNIGGIANLSLLFPGQAVRGYDTGPGNMLMDAWIWRQCAQPYDKDAAWAKEGQVILPLLQKMLRDPYFAASAPKSTGREYFNYGWLERHLTAFPGADARDVQATLAELTAVSIAQQVLLNGGCERLMVCGGGSRNPLVMARLAALLPGIEVSTTDKAGISGDDMEALAFAWLAWRTLAGLPGNLPSVTGATEASVLGAIYPANPITQS</sequence>